<protein>
    <recommendedName>
        <fullName evidence="1">Protein translation factor SUI1 homolog</fullName>
    </recommendedName>
</protein>
<proteinExistence type="inferred from homology"/>
<accession>Q3IU96</accession>
<name>SUI1_NATPD</name>
<comment type="similarity">
    <text evidence="1">Belongs to the SUI1 family.</text>
</comment>
<dbReference type="EMBL" id="CR936257">
    <property type="protein sequence ID" value="CAI48285.1"/>
    <property type="molecule type" value="Genomic_DNA"/>
</dbReference>
<dbReference type="RefSeq" id="WP_011321923.1">
    <property type="nucleotide sequence ID" value="NC_007426.1"/>
</dbReference>
<dbReference type="SMR" id="Q3IU96"/>
<dbReference type="STRING" id="348780.NP_0388A"/>
<dbReference type="EnsemblBacteria" id="CAI48285">
    <property type="protein sequence ID" value="CAI48285"/>
    <property type="gene ID" value="NP_0388A"/>
</dbReference>
<dbReference type="GeneID" id="3703263"/>
<dbReference type="KEGG" id="nph:NP_0388A"/>
<dbReference type="eggNOG" id="arCOG04223">
    <property type="taxonomic scope" value="Archaea"/>
</dbReference>
<dbReference type="HOGENOM" id="CLU_082805_6_1_2"/>
<dbReference type="OrthoDB" id="11182at2157"/>
<dbReference type="Proteomes" id="UP000002698">
    <property type="component" value="Chromosome"/>
</dbReference>
<dbReference type="GO" id="GO:0003729">
    <property type="term" value="F:mRNA binding"/>
    <property type="evidence" value="ECO:0007669"/>
    <property type="project" value="TreeGrafter"/>
</dbReference>
<dbReference type="GO" id="GO:0003743">
    <property type="term" value="F:translation initiation factor activity"/>
    <property type="evidence" value="ECO:0007669"/>
    <property type="project" value="InterPro"/>
</dbReference>
<dbReference type="GO" id="GO:0001731">
    <property type="term" value="P:formation of translation preinitiation complex"/>
    <property type="evidence" value="ECO:0007669"/>
    <property type="project" value="TreeGrafter"/>
</dbReference>
<dbReference type="GO" id="GO:0006417">
    <property type="term" value="P:regulation of translation"/>
    <property type="evidence" value="ECO:0007669"/>
    <property type="project" value="UniProtKB-UniRule"/>
</dbReference>
<dbReference type="GO" id="GO:0002188">
    <property type="term" value="P:translation reinitiation"/>
    <property type="evidence" value="ECO:0007669"/>
    <property type="project" value="TreeGrafter"/>
</dbReference>
<dbReference type="CDD" id="cd11567">
    <property type="entry name" value="YciH_like"/>
    <property type="match status" value="1"/>
</dbReference>
<dbReference type="FunFam" id="3.30.780.10:FF:000006">
    <property type="entry name" value="Protein translation factor SUI1 homolog"/>
    <property type="match status" value="1"/>
</dbReference>
<dbReference type="Gene3D" id="3.30.780.10">
    <property type="entry name" value="SUI1-like domain"/>
    <property type="match status" value="1"/>
</dbReference>
<dbReference type="HAMAP" id="MF_00604">
    <property type="entry name" value="SUI1"/>
    <property type="match status" value="1"/>
</dbReference>
<dbReference type="InterPro" id="IPR050318">
    <property type="entry name" value="DENR/SUI1_TIF"/>
</dbReference>
<dbReference type="InterPro" id="IPR001950">
    <property type="entry name" value="SUI1"/>
</dbReference>
<dbReference type="InterPro" id="IPR022851">
    <property type="entry name" value="SUI1_arc"/>
</dbReference>
<dbReference type="InterPro" id="IPR005872">
    <property type="entry name" value="SUI1_arc_bac"/>
</dbReference>
<dbReference type="InterPro" id="IPR036877">
    <property type="entry name" value="SUI1_dom_sf"/>
</dbReference>
<dbReference type="NCBIfam" id="NF002096">
    <property type="entry name" value="PRK00939.1"/>
    <property type="match status" value="1"/>
</dbReference>
<dbReference type="NCBIfam" id="TIGR01158">
    <property type="entry name" value="SUI1_rel"/>
    <property type="match status" value="1"/>
</dbReference>
<dbReference type="PANTHER" id="PTHR12789:SF0">
    <property type="entry name" value="DENSITY-REGULATED PROTEIN"/>
    <property type="match status" value="1"/>
</dbReference>
<dbReference type="PANTHER" id="PTHR12789">
    <property type="entry name" value="DENSITY-REGULATED PROTEIN HOMOLOG"/>
    <property type="match status" value="1"/>
</dbReference>
<dbReference type="Pfam" id="PF01253">
    <property type="entry name" value="SUI1"/>
    <property type="match status" value="1"/>
</dbReference>
<dbReference type="PIRSF" id="PIRSF037511">
    <property type="entry name" value="Transl_init_SUI1_pro"/>
    <property type="match status" value="1"/>
</dbReference>
<dbReference type="SUPFAM" id="SSF55159">
    <property type="entry name" value="eIF1-like"/>
    <property type="match status" value="1"/>
</dbReference>
<dbReference type="PROSITE" id="PS50296">
    <property type="entry name" value="SUI1"/>
    <property type="match status" value="1"/>
</dbReference>
<keyword id="KW-0648">Protein biosynthesis</keyword>
<keyword id="KW-1185">Reference proteome</keyword>
<keyword id="KW-0810">Translation regulation</keyword>
<gene>
    <name type="ordered locus">NP_0388A</name>
</gene>
<evidence type="ECO:0000255" key="1">
    <source>
        <dbReference type="HAMAP-Rule" id="MF_00604"/>
    </source>
</evidence>
<sequence length="97" mass="10701">MSEVCSTCGLPEELCVCEDVAKESQEINIRIDERRYGKEVTVIEGFDPQDVDLDSLSSDLKSKFACGGTVEDGSIELQGNHLGRVEDFLREKGFNVA</sequence>
<organism>
    <name type="scientific">Natronomonas pharaonis (strain ATCC 35678 / DSM 2160 / CIP 103997 / JCM 8858 / NBRC 14720 / NCIMB 2260 / Gabara)</name>
    <name type="common">Halobacterium pharaonis</name>
    <dbReference type="NCBI Taxonomy" id="348780"/>
    <lineage>
        <taxon>Archaea</taxon>
        <taxon>Methanobacteriati</taxon>
        <taxon>Methanobacteriota</taxon>
        <taxon>Stenosarchaea group</taxon>
        <taxon>Halobacteria</taxon>
        <taxon>Halobacteriales</taxon>
        <taxon>Haloarculaceae</taxon>
        <taxon>Natronomonas</taxon>
    </lineage>
</organism>
<feature type="chain" id="PRO_1000006440" description="Protein translation factor SUI1 homolog">
    <location>
        <begin position="1"/>
        <end position="97"/>
    </location>
</feature>
<reference key="1">
    <citation type="journal article" date="2005" name="Genome Res.">
        <title>Living with two extremes: conclusions from the genome sequence of Natronomonas pharaonis.</title>
        <authorList>
            <person name="Falb M."/>
            <person name="Pfeiffer F."/>
            <person name="Palm P."/>
            <person name="Rodewald K."/>
            <person name="Hickmann V."/>
            <person name="Tittor J."/>
            <person name="Oesterhelt D."/>
        </authorList>
    </citation>
    <scope>NUCLEOTIDE SEQUENCE [LARGE SCALE GENOMIC DNA]</scope>
    <source>
        <strain>ATCC 35678 / DSM 2160 / CIP 103997 / JCM 8858 / NBRC 14720 / NCIMB 2260 / Gabara</strain>
    </source>
</reference>